<comment type="subcellular location">
    <subcellularLocation>
        <location evidence="3">Host membrane</location>
        <topology evidence="3">Single-pass membrane protein</topology>
    </subcellularLocation>
    <subcellularLocation>
        <location evidence="1">Virion</location>
    </subcellularLocation>
</comment>
<comment type="similarity">
    <text evidence="3">Belongs to the asfivirus B117L family.</text>
</comment>
<gene>
    <name type="ordered locus">Ken-095</name>
</gene>
<protein>
    <recommendedName>
        <fullName>Uncharacterized protein B117L</fullName>
        <shortName>pB117L</shortName>
    </recommendedName>
</protein>
<reference key="1">
    <citation type="submission" date="2003-03" db="EMBL/GenBank/DDBJ databases">
        <title>African swine fever virus genomes.</title>
        <authorList>
            <person name="Kutish G.F."/>
            <person name="Rock D.L."/>
        </authorList>
    </citation>
    <scope>NUCLEOTIDE SEQUENCE [LARGE SCALE GENOMIC DNA]</scope>
</reference>
<dbReference type="EMBL" id="AY261360">
    <property type="status" value="NOT_ANNOTATED_CDS"/>
    <property type="molecule type" value="Genomic_DNA"/>
</dbReference>
<dbReference type="SMR" id="P0CA19"/>
<dbReference type="Proteomes" id="UP000000861">
    <property type="component" value="Segment"/>
</dbReference>
<dbReference type="GO" id="GO:0033644">
    <property type="term" value="C:host cell membrane"/>
    <property type="evidence" value="ECO:0007669"/>
    <property type="project" value="UniProtKB-SubCell"/>
</dbReference>
<dbReference type="GO" id="GO:0016020">
    <property type="term" value="C:membrane"/>
    <property type="evidence" value="ECO:0007669"/>
    <property type="project" value="UniProtKB-KW"/>
</dbReference>
<dbReference type="GO" id="GO:0044423">
    <property type="term" value="C:virion component"/>
    <property type="evidence" value="ECO:0007669"/>
    <property type="project" value="UniProtKB-KW"/>
</dbReference>
<feature type="chain" id="PRO_0000373481" description="Uncharacterized protein B117L">
    <location>
        <begin position="1"/>
        <end position="140"/>
    </location>
</feature>
<feature type="transmembrane region" description="Helical" evidence="2">
    <location>
        <begin position="92"/>
        <end position="112"/>
    </location>
</feature>
<feature type="glycosylation site" description="N-linked (GlcNAc...) asparagine; by host" evidence="2">
    <location>
        <position position="86"/>
    </location>
</feature>
<keyword id="KW-0325">Glycoprotein</keyword>
<keyword id="KW-1043">Host membrane</keyword>
<keyword id="KW-0472">Membrane</keyword>
<keyword id="KW-0812">Transmembrane</keyword>
<keyword id="KW-1133">Transmembrane helix</keyword>
<keyword id="KW-0946">Virion</keyword>
<proteinExistence type="inferred from homology"/>
<accession>P0CA19</accession>
<evidence type="ECO:0000250" key="1">
    <source>
        <dbReference type="UniProtKB" id="Q65172"/>
    </source>
</evidence>
<evidence type="ECO:0000255" key="2"/>
<evidence type="ECO:0000305" key="3"/>
<name>VF117_ASFK5</name>
<sequence>MGYTIQLDKDGDYYWDDDSHDPYMRANAAAFHAAPHAAAFNAAAPHAAAFNAAAPHAAAFNAAAPHAAAFNTATHHAFHEPFIKLNLTDKNIFNGLGFILIVIFIYLLLITLQQMLTRHIYNTVQHCVKAHLDSKNLQSR</sequence>
<organism>
    <name type="scientific">African swine fever virus (isolate Pig/Kenya/KEN-50/1950)</name>
    <name type="common">ASFV</name>
    <dbReference type="NCBI Taxonomy" id="561445"/>
    <lineage>
        <taxon>Viruses</taxon>
        <taxon>Varidnaviria</taxon>
        <taxon>Bamfordvirae</taxon>
        <taxon>Nucleocytoviricota</taxon>
        <taxon>Pokkesviricetes</taxon>
        <taxon>Asfuvirales</taxon>
        <taxon>Asfarviridae</taxon>
        <taxon>Asfivirus</taxon>
        <taxon>African swine fever virus</taxon>
    </lineage>
</organism>
<organismHost>
    <name type="scientific">Ornithodoros</name>
    <name type="common">relapsing fever ticks</name>
    <dbReference type="NCBI Taxonomy" id="6937"/>
</organismHost>
<organismHost>
    <name type="scientific">Phacochoerus aethiopicus</name>
    <name type="common">Warthog</name>
    <dbReference type="NCBI Taxonomy" id="85517"/>
</organismHost>
<organismHost>
    <name type="scientific">Phacochoerus africanus</name>
    <name type="common">Warthog</name>
    <dbReference type="NCBI Taxonomy" id="41426"/>
</organismHost>
<organismHost>
    <name type="scientific">Potamochoerus larvatus</name>
    <name type="common">Bushpig</name>
    <dbReference type="NCBI Taxonomy" id="273792"/>
</organismHost>
<organismHost>
    <name type="scientific">Sus scrofa</name>
    <name type="common">Pig</name>
    <dbReference type="NCBI Taxonomy" id="9823"/>
</organismHost>